<keyword id="KW-0963">Cytoplasm</keyword>
<keyword id="KW-0312">Gluconeogenesis</keyword>
<keyword id="KW-0324">Glycolysis</keyword>
<keyword id="KW-0413">Isomerase</keyword>
<keyword id="KW-1185">Reference proteome</keyword>
<protein>
    <recommendedName>
        <fullName evidence="1">Glucose-6-phosphate isomerase</fullName>
        <shortName evidence="1">GPI</shortName>
        <ecNumber evidence="1">5.3.1.9</ecNumber>
    </recommendedName>
    <alternativeName>
        <fullName evidence="1">Phosphoglucose isomerase</fullName>
        <shortName evidence="1">PGI</shortName>
    </alternativeName>
    <alternativeName>
        <fullName evidence="1">Phosphohexose isomerase</fullName>
        <shortName evidence="1">PHI</shortName>
    </alternativeName>
</protein>
<name>G6PI_CLONN</name>
<proteinExistence type="inferred from homology"/>
<reference key="1">
    <citation type="journal article" date="2006" name="Nat. Biotechnol.">
        <title>The genome and transcriptomes of the anti-tumor agent Clostridium novyi-NT.</title>
        <authorList>
            <person name="Bettegowda C."/>
            <person name="Huang X."/>
            <person name="Lin J."/>
            <person name="Cheong I."/>
            <person name="Kohli M."/>
            <person name="Szabo S.A."/>
            <person name="Zhang X."/>
            <person name="Diaz L.A. Jr."/>
            <person name="Velculescu V.E."/>
            <person name="Parmigiani G."/>
            <person name="Kinzler K.W."/>
            <person name="Vogelstein B."/>
            <person name="Zhou S."/>
        </authorList>
    </citation>
    <scope>NUCLEOTIDE SEQUENCE [LARGE SCALE GENOMIC DNA]</scope>
    <source>
        <strain>NT</strain>
    </source>
</reference>
<gene>
    <name evidence="1" type="primary">pgi</name>
    <name type="ordered locus">NT01CX_0441</name>
</gene>
<feature type="chain" id="PRO_1000013957" description="Glucose-6-phosphate isomerase">
    <location>
        <begin position="1"/>
        <end position="450"/>
    </location>
</feature>
<feature type="active site" description="Proton donor" evidence="1">
    <location>
        <position position="291"/>
    </location>
</feature>
<feature type="active site" evidence="1">
    <location>
        <position position="312"/>
    </location>
</feature>
<feature type="active site" evidence="1">
    <location>
        <position position="426"/>
    </location>
</feature>
<sequence>MYKSLSLDLTKTKPFLNDYEVEQLQPMVSAAHKLLHEKTGAGNDFLGWIDLPVNYDKDEFARIKKSAEKIRNNSEALIVIGIGGSYLGARAAIEMLTHTFGNVASKEARKAPQIFYAGNNISSTYMADLIETVKDMDFSVNVISKSGTTTEPAIAFRIFKDLLEKKYGKEGAKERIFATTDKAKGALRTLADSEGYETFVIPDDVGGRYSVLTAVGLLPIATAGVDIDEMMKGAADAREEYSTDDLSKNTAYRYAAARNALYNKGKNIEMMVNFEPCLHYIGEWWKQLFGESEGKDHKGIFPAAADFSTDLHSMGQYIQEGLRTLVETHLNVEKPRKSVIIEANEDNLDGLNFLAGKDMDYVNNQAFRGTVIAHNEGEVPNMIINIPELTPYYFGYLVYFFEKSCALSGYLLGVNPFNQPGVEAYKKNMFALLGKPGYEDMKAEIEAKLQ</sequence>
<evidence type="ECO:0000255" key="1">
    <source>
        <dbReference type="HAMAP-Rule" id="MF_00473"/>
    </source>
</evidence>
<dbReference type="EC" id="5.3.1.9" evidence="1"/>
<dbReference type="EMBL" id="CP000382">
    <property type="protein sequence ID" value="ABK62455.1"/>
    <property type="molecule type" value="Genomic_DNA"/>
</dbReference>
<dbReference type="RefSeq" id="WP_011722896.1">
    <property type="nucleotide sequence ID" value="NC_008593.1"/>
</dbReference>
<dbReference type="SMR" id="A0Q2R0"/>
<dbReference type="STRING" id="386415.NT01CX_0441"/>
<dbReference type="KEGG" id="cno:NT01CX_0441"/>
<dbReference type="PATRIC" id="fig|386415.7.peg.1946"/>
<dbReference type="eggNOG" id="COG0166">
    <property type="taxonomic scope" value="Bacteria"/>
</dbReference>
<dbReference type="HOGENOM" id="CLU_037303_0_1_9"/>
<dbReference type="UniPathway" id="UPA00109">
    <property type="reaction ID" value="UER00181"/>
</dbReference>
<dbReference type="UniPathway" id="UPA00138"/>
<dbReference type="Proteomes" id="UP000008220">
    <property type="component" value="Chromosome"/>
</dbReference>
<dbReference type="GO" id="GO:0005829">
    <property type="term" value="C:cytosol"/>
    <property type="evidence" value="ECO:0007669"/>
    <property type="project" value="TreeGrafter"/>
</dbReference>
<dbReference type="GO" id="GO:0097367">
    <property type="term" value="F:carbohydrate derivative binding"/>
    <property type="evidence" value="ECO:0007669"/>
    <property type="project" value="InterPro"/>
</dbReference>
<dbReference type="GO" id="GO:0004347">
    <property type="term" value="F:glucose-6-phosphate isomerase activity"/>
    <property type="evidence" value="ECO:0007669"/>
    <property type="project" value="UniProtKB-UniRule"/>
</dbReference>
<dbReference type="GO" id="GO:0048029">
    <property type="term" value="F:monosaccharide binding"/>
    <property type="evidence" value="ECO:0007669"/>
    <property type="project" value="TreeGrafter"/>
</dbReference>
<dbReference type="GO" id="GO:0006094">
    <property type="term" value="P:gluconeogenesis"/>
    <property type="evidence" value="ECO:0007669"/>
    <property type="project" value="UniProtKB-UniRule"/>
</dbReference>
<dbReference type="GO" id="GO:0051156">
    <property type="term" value="P:glucose 6-phosphate metabolic process"/>
    <property type="evidence" value="ECO:0007669"/>
    <property type="project" value="TreeGrafter"/>
</dbReference>
<dbReference type="GO" id="GO:0006096">
    <property type="term" value="P:glycolytic process"/>
    <property type="evidence" value="ECO:0007669"/>
    <property type="project" value="UniProtKB-UniRule"/>
</dbReference>
<dbReference type="CDD" id="cd05015">
    <property type="entry name" value="SIS_PGI_1"/>
    <property type="match status" value="1"/>
</dbReference>
<dbReference type="CDD" id="cd05016">
    <property type="entry name" value="SIS_PGI_2"/>
    <property type="match status" value="1"/>
</dbReference>
<dbReference type="FunFam" id="3.40.50.10490:FF:000015">
    <property type="entry name" value="Glucose-6-phosphate isomerase"/>
    <property type="match status" value="1"/>
</dbReference>
<dbReference type="FunFam" id="3.40.50.10490:FF:000016">
    <property type="entry name" value="Glucose-6-phosphate isomerase"/>
    <property type="match status" value="1"/>
</dbReference>
<dbReference type="Gene3D" id="3.40.50.10490">
    <property type="entry name" value="Glucose-6-phosphate isomerase like protein, domain 1"/>
    <property type="match status" value="3"/>
</dbReference>
<dbReference type="HAMAP" id="MF_00473">
    <property type="entry name" value="G6P_isomerase"/>
    <property type="match status" value="1"/>
</dbReference>
<dbReference type="InterPro" id="IPR001672">
    <property type="entry name" value="G6P_Isomerase"/>
</dbReference>
<dbReference type="InterPro" id="IPR018189">
    <property type="entry name" value="Phosphoglucose_isomerase_CS"/>
</dbReference>
<dbReference type="InterPro" id="IPR046348">
    <property type="entry name" value="SIS_dom_sf"/>
</dbReference>
<dbReference type="InterPro" id="IPR035476">
    <property type="entry name" value="SIS_PGI_1"/>
</dbReference>
<dbReference type="InterPro" id="IPR035482">
    <property type="entry name" value="SIS_PGI_2"/>
</dbReference>
<dbReference type="NCBIfam" id="NF010697">
    <property type="entry name" value="PRK14097.1"/>
    <property type="match status" value="1"/>
</dbReference>
<dbReference type="PANTHER" id="PTHR11469">
    <property type="entry name" value="GLUCOSE-6-PHOSPHATE ISOMERASE"/>
    <property type="match status" value="1"/>
</dbReference>
<dbReference type="PANTHER" id="PTHR11469:SF1">
    <property type="entry name" value="GLUCOSE-6-PHOSPHATE ISOMERASE"/>
    <property type="match status" value="1"/>
</dbReference>
<dbReference type="Pfam" id="PF00342">
    <property type="entry name" value="PGI"/>
    <property type="match status" value="1"/>
</dbReference>
<dbReference type="PRINTS" id="PR00662">
    <property type="entry name" value="G6PISOMERASE"/>
</dbReference>
<dbReference type="SUPFAM" id="SSF53697">
    <property type="entry name" value="SIS domain"/>
    <property type="match status" value="1"/>
</dbReference>
<dbReference type="PROSITE" id="PS00765">
    <property type="entry name" value="P_GLUCOSE_ISOMERASE_1"/>
    <property type="match status" value="1"/>
</dbReference>
<dbReference type="PROSITE" id="PS00174">
    <property type="entry name" value="P_GLUCOSE_ISOMERASE_2"/>
    <property type="match status" value="1"/>
</dbReference>
<dbReference type="PROSITE" id="PS51463">
    <property type="entry name" value="P_GLUCOSE_ISOMERASE_3"/>
    <property type="match status" value="1"/>
</dbReference>
<comment type="function">
    <text evidence="1">Catalyzes the reversible isomerization of glucose-6-phosphate to fructose-6-phosphate.</text>
</comment>
<comment type="catalytic activity">
    <reaction evidence="1">
        <text>alpha-D-glucose 6-phosphate = beta-D-fructose 6-phosphate</text>
        <dbReference type="Rhea" id="RHEA:11816"/>
        <dbReference type="ChEBI" id="CHEBI:57634"/>
        <dbReference type="ChEBI" id="CHEBI:58225"/>
        <dbReference type="EC" id="5.3.1.9"/>
    </reaction>
</comment>
<comment type="pathway">
    <text evidence="1">Carbohydrate biosynthesis; gluconeogenesis.</text>
</comment>
<comment type="pathway">
    <text evidence="1">Carbohydrate degradation; glycolysis; D-glyceraldehyde 3-phosphate and glycerone phosphate from D-glucose: step 2/4.</text>
</comment>
<comment type="subcellular location">
    <subcellularLocation>
        <location evidence="1">Cytoplasm</location>
    </subcellularLocation>
</comment>
<comment type="similarity">
    <text evidence="1">Belongs to the GPI family.</text>
</comment>
<organism>
    <name type="scientific">Clostridium novyi (strain NT)</name>
    <dbReference type="NCBI Taxonomy" id="386415"/>
    <lineage>
        <taxon>Bacteria</taxon>
        <taxon>Bacillati</taxon>
        <taxon>Bacillota</taxon>
        <taxon>Clostridia</taxon>
        <taxon>Eubacteriales</taxon>
        <taxon>Clostridiaceae</taxon>
        <taxon>Clostridium</taxon>
    </lineage>
</organism>
<accession>A0Q2R0</accession>